<evidence type="ECO:0000255" key="1">
    <source>
        <dbReference type="HAMAP-Rule" id="MF_00513"/>
    </source>
</evidence>
<evidence type="ECO:0000305" key="2"/>
<keyword id="KW-0238">DNA-binding</keyword>
<keyword id="KW-0804">Transcription</keyword>
<keyword id="KW-0805">Transcription regulation</keyword>
<dbReference type="EMBL" id="CP000094">
    <property type="protein sequence ID" value="ABA76220.1"/>
    <property type="molecule type" value="Genomic_DNA"/>
</dbReference>
<dbReference type="RefSeq" id="WP_011335708.1">
    <property type="nucleotide sequence ID" value="NC_007492.2"/>
</dbReference>
<dbReference type="SMR" id="Q3K7N4"/>
<dbReference type="KEGG" id="pfo:Pfl01_4483"/>
<dbReference type="eggNOG" id="COG0583">
    <property type="taxonomic scope" value="Bacteria"/>
</dbReference>
<dbReference type="HOGENOM" id="CLU_063829_0_0_6"/>
<dbReference type="Proteomes" id="UP000002704">
    <property type="component" value="Chromosome"/>
</dbReference>
<dbReference type="GO" id="GO:0003677">
    <property type="term" value="F:DNA binding"/>
    <property type="evidence" value="ECO:0007669"/>
    <property type="project" value="UniProtKB-UniRule"/>
</dbReference>
<dbReference type="GO" id="GO:0003700">
    <property type="term" value="F:DNA-binding transcription factor activity"/>
    <property type="evidence" value="ECO:0007669"/>
    <property type="project" value="UniProtKB-UniRule"/>
</dbReference>
<dbReference type="Gene3D" id="3.40.190.290">
    <property type="match status" value="1"/>
</dbReference>
<dbReference type="Gene3D" id="1.10.10.10">
    <property type="entry name" value="Winged helix-like DNA-binding domain superfamily/Winged helix DNA-binding domain"/>
    <property type="match status" value="1"/>
</dbReference>
<dbReference type="HAMAP" id="MF_00513">
    <property type="entry name" value="HTH_type_ArgP"/>
    <property type="match status" value="1"/>
</dbReference>
<dbReference type="InterPro" id="IPR017685">
    <property type="entry name" value="ArgP"/>
</dbReference>
<dbReference type="InterPro" id="IPR023490">
    <property type="entry name" value="ArgP_gammaproteobact"/>
</dbReference>
<dbReference type="InterPro" id="IPR050176">
    <property type="entry name" value="LTTR"/>
</dbReference>
<dbReference type="InterPro" id="IPR005119">
    <property type="entry name" value="LysR_subst-bd"/>
</dbReference>
<dbReference type="InterPro" id="IPR000847">
    <property type="entry name" value="Tscrpt_reg_HTH_LysR"/>
</dbReference>
<dbReference type="InterPro" id="IPR036388">
    <property type="entry name" value="WH-like_DNA-bd_sf"/>
</dbReference>
<dbReference type="InterPro" id="IPR036390">
    <property type="entry name" value="WH_DNA-bd_sf"/>
</dbReference>
<dbReference type="NCBIfam" id="TIGR03298">
    <property type="entry name" value="argP"/>
    <property type="match status" value="1"/>
</dbReference>
<dbReference type="NCBIfam" id="NF002964">
    <property type="entry name" value="PRK03635.1"/>
    <property type="match status" value="1"/>
</dbReference>
<dbReference type="NCBIfam" id="NF009888">
    <property type="entry name" value="PRK13348.1"/>
    <property type="match status" value="1"/>
</dbReference>
<dbReference type="PANTHER" id="PTHR30579:SF2">
    <property type="entry name" value="HTH-TYPE TRANSCRIPTIONAL REGULATOR ARGP"/>
    <property type="match status" value="1"/>
</dbReference>
<dbReference type="PANTHER" id="PTHR30579">
    <property type="entry name" value="TRANSCRIPTIONAL REGULATOR"/>
    <property type="match status" value="1"/>
</dbReference>
<dbReference type="Pfam" id="PF00126">
    <property type="entry name" value="HTH_1"/>
    <property type="match status" value="1"/>
</dbReference>
<dbReference type="Pfam" id="PF03466">
    <property type="entry name" value="LysR_substrate"/>
    <property type="match status" value="1"/>
</dbReference>
<dbReference type="PRINTS" id="PR00039">
    <property type="entry name" value="HTHLYSR"/>
</dbReference>
<dbReference type="SUPFAM" id="SSF53850">
    <property type="entry name" value="Periplasmic binding protein-like II"/>
    <property type="match status" value="1"/>
</dbReference>
<dbReference type="SUPFAM" id="SSF46785">
    <property type="entry name" value="Winged helix' DNA-binding domain"/>
    <property type="match status" value="1"/>
</dbReference>
<dbReference type="PROSITE" id="PS50931">
    <property type="entry name" value="HTH_LYSR"/>
    <property type="match status" value="1"/>
</dbReference>
<reference key="1">
    <citation type="journal article" date="2009" name="Genome Biol.">
        <title>Genomic and genetic analyses of diversity and plant interactions of Pseudomonas fluorescens.</title>
        <authorList>
            <person name="Silby M.W."/>
            <person name="Cerdeno-Tarraga A.M."/>
            <person name="Vernikos G.S."/>
            <person name="Giddens S.R."/>
            <person name="Jackson R.W."/>
            <person name="Preston G.M."/>
            <person name="Zhang X.-X."/>
            <person name="Moon C.D."/>
            <person name="Gehrig S.M."/>
            <person name="Godfrey S.A.C."/>
            <person name="Knight C.G."/>
            <person name="Malone J.G."/>
            <person name="Robinson Z."/>
            <person name="Spiers A.J."/>
            <person name="Harris S."/>
            <person name="Challis G.L."/>
            <person name="Yaxley A.M."/>
            <person name="Harris D."/>
            <person name="Seeger K."/>
            <person name="Murphy L."/>
            <person name="Rutter S."/>
            <person name="Squares R."/>
            <person name="Quail M.A."/>
            <person name="Saunders E."/>
            <person name="Mavromatis K."/>
            <person name="Brettin T.S."/>
            <person name="Bentley S.D."/>
            <person name="Hothersall J."/>
            <person name="Stephens E."/>
            <person name="Thomas C.M."/>
            <person name="Parkhill J."/>
            <person name="Levy S.B."/>
            <person name="Rainey P.B."/>
            <person name="Thomson N.R."/>
        </authorList>
    </citation>
    <scope>NUCLEOTIDE SEQUENCE [LARGE SCALE GENOMIC DNA]</scope>
    <source>
        <strain>Pf0-1</strain>
    </source>
</reference>
<name>ARGP_PSEPF</name>
<sequence length="297" mass="32896">MFDYKLLSALAAVVEQAGFERAAQVLGLSQSAISQRIKLLEARVGQPVLVRGTPPSPTEIGRRLLNHVQQVRLLERDLQTLVPALDEEGLPERLRIALNADSLATWWAEAVGDFCAEQHLLLDLIVEDQTVGLKRMRAGEVAGCLCASERPVAGARSVLLGAMRYRALASPAFIKRHFPDGVRAEQLPRTPALVFGPDDFLQHRYLASLGVDGGFEHHLCPSSEGFIRLTEAGLGWGLVPELQVREQLERGVLRELLPDKPIDVPLYWHHWRNGGQLLGLLTEQLVRSSAQWLVPLD</sequence>
<proteinExistence type="inferred from homology"/>
<comment type="function">
    <text evidence="1">Controls the transcription of genes involved in arginine and lysine metabolism.</text>
</comment>
<comment type="subunit">
    <text evidence="1">Homodimer.</text>
</comment>
<comment type="similarity">
    <text evidence="2">Belongs to the LysR transcriptional regulatory family.</text>
</comment>
<accession>Q3K7N4</accession>
<organism>
    <name type="scientific">Pseudomonas fluorescens (strain Pf0-1)</name>
    <dbReference type="NCBI Taxonomy" id="205922"/>
    <lineage>
        <taxon>Bacteria</taxon>
        <taxon>Pseudomonadati</taxon>
        <taxon>Pseudomonadota</taxon>
        <taxon>Gammaproteobacteria</taxon>
        <taxon>Pseudomonadales</taxon>
        <taxon>Pseudomonadaceae</taxon>
        <taxon>Pseudomonas</taxon>
    </lineage>
</organism>
<protein>
    <recommendedName>
        <fullName evidence="1">HTH-type transcriptional regulator ArgP</fullName>
    </recommendedName>
</protein>
<gene>
    <name evidence="1" type="primary">argP</name>
    <name type="synonym">iciA</name>
    <name type="ordered locus">Pfl01_4483</name>
</gene>
<feature type="chain" id="PRO_0000258611" description="HTH-type transcriptional regulator ArgP">
    <location>
        <begin position="1"/>
        <end position="297"/>
    </location>
</feature>
<feature type="domain" description="HTH lysR-type" evidence="1">
    <location>
        <begin position="2"/>
        <end position="58"/>
    </location>
</feature>
<feature type="DNA-binding region" description="H-T-H motif" evidence="1">
    <location>
        <begin position="19"/>
        <end position="38"/>
    </location>
</feature>